<sequence length="318" mass="35603">MPKRGKKGAVAEDGDELKTEPEAKKSKTTAKKNDKEAAGEGPALYEDPPDQKTSPSGKPATLKICSWNVDGLRAWIKKKGLDWVKEEAPDILCLQETKCSENKLPAELQELPGLSHQYWSAPSDKEGYSGVGLLSRQCPLKVSYGIGEEEHDQEGRVIVAEFDSFVLVTAYVPNAGRGLVRLEYRQRWDEAFRRFLKGLASRKPLVLCGDLNVAHEEIDLRNPKGNKKNAGFTPQERQGFGELLQAVPLADSFRHLYPNTPYAYTFWTYMMNARSKNVGWRLDYFLLSHSLLTALCDSKIRSKALGSDHCPITLYLAL</sequence>
<organism>
    <name type="scientific">Pongo pygmaeus</name>
    <name type="common">Bornean orangutan</name>
    <dbReference type="NCBI Taxonomy" id="9600"/>
    <lineage>
        <taxon>Eukaryota</taxon>
        <taxon>Metazoa</taxon>
        <taxon>Chordata</taxon>
        <taxon>Craniata</taxon>
        <taxon>Vertebrata</taxon>
        <taxon>Euteleostomi</taxon>
        <taxon>Mammalia</taxon>
        <taxon>Eutheria</taxon>
        <taxon>Euarchontoglires</taxon>
        <taxon>Primates</taxon>
        <taxon>Haplorrhini</taxon>
        <taxon>Catarrhini</taxon>
        <taxon>Hominidae</taxon>
        <taxon>Pongo</taxon>
    </lineage>
</organism>
<keyword id="KW-0007">Acetylation</keyword>
<keyword id="KW-0010">Activator</keyword>
<keyword id="KW-0165">Cleavage on pair of basic residues</keyword>
<keyword id="KW-0963">Cytoplasm</keyword>
<keyword id="KW-1015">Disulfide bond</keyword>
<keyword id="KW-0227">DNA damage</keyword>
<keyword id="KW-0233">DNA recombination</keyword>
<keyword id="KW-0234">DNA repair</keyword>
<keyword id="KW-0238">DNA-binding</keyword>
<keyword id="KW-0255">Endonuclease</keyword>
<keyword id="KW-0256">Endoplasmic reticulum</keyword>
<keyword id="KW-0269">Exonuclease</keyword>
<keyword id="KW-0378">Hydrolase</keyword>
<keyword id="KW-0460">Magnesium</keyword>
<keyword id="KW-0479">Metal-binding</keyword>
<keyword id="KW-0496">Mitochondrion</keyword>
<keyword id="KW-0540">Nuclease</keyword>
<keyword id="KW-0539">Nucleus</keyword>
<keyword id="KW-0597">Phosphoprotein</keyword>
<keyword id="KW-0678">Repressor</keyword>
<keyword id="KW-0694">RNA-binding</keyword>
<keyword id="KW-0702">S-nitrosylation</keyword>
<keyword id="KW-0804">Transcription</keyword>
<keyword id="KW-0805">Transcription regulation</keyword>
<keyword id="KW-0832">Ubl conjugation</keyword>
<comment type="function">
    <text evidence="3 4">Multifunctional protein that plays a central role in the cellular response to oxidative stress. The two major activities of APEX1 are DNA repair and redox regulation of transcriptional factors (By similarity). Functions as an apurinic/apyrimidinic (AP) endodeoxyribonuclease in the base excision repair (BER) pathway of DNA lesions induced by oxidative and alkylating agents. Initiates repair of AP sites in DNA by catalyzing hydrolytic incision of the phosphodiester backbone immediately adjacent to the damage, generating a single-strand break with 5'-deoxyribose phosphate and 3'-hydroxyl ends. Also incises at AP sites in the DNA strand of DNA/RNA hybrids, single-stranded DNA regions of R-loop structures, and single-stranded RNA molecules (By similarity). Operates at switch sites of immunoglobulin (Ig) constant regions where it mediates Ig isotype class switch recombination. Processes AP sites induced by successive action of AICDA and UNG. Generates staggered nicks in opposite DNA strands resulting in the formation of double-strand DNA breaks that are finally resolved via non-homologous end joining repair pathway (By similarity). Has 3'-5' exodeoxyribonuclease activity on mismatched deoxyribonucleotides at the 3' termini of nicked or gapped DNA molecules during short-patch BER (By similarity). Possesses DNA 3' phosphodiesterase activity capable of removing lesions (such as phosphoglycolate and 8-oxoguanine) blocking the 3' side of DNA strand breaks (By similarity). Also acts as an endoribonuclease involved in the control of single-stranded RNA metabolism. Plays a role in regulating MYC mRNA turnover by preferentially cleaving in between UA and CA dinucleotides of the MYC coding region determinant (CRD). In association with NMD1, plays a role in the rRNA quality control process during cell cycle progression (By similarity). Acts as a loading factor for POLB onto non-incised AP sites in DNA and stimulates the 5'-terminal deoxyribose 5'-phosphate (dRp) excision activity of POLB (By similarity). Exerts reversible nuclear redox activity to regulate DNA binding affinity and transcriptional activity of transcriptional factors by controlling the redox status of their DNA-binding domain, such as the FOS/JUN AP-1 complex after exposure to IR (By similarity). Involved in calcium-dependent down-regulation of parathyroid hormone (PTH) expression by binding to negative calcium response elements (nCaREs). Together with HNRNPL or the dimer XRCC5/XRCC6, associates with nCaRE, acting as an activator of transcriptional repression (By similarity). May also play a role in the epigenetic regulation of gene expression by participating in DNA demethylation (By similarity). Stimulates the YBX1-mediated MDR1 promoter activity, when acetylated at Lys-6 and Lys-7, leading to drug resistance (By similarity). Plays a role in protection from granzyme-mediated cellular repair leading to cell death. Binds DNA and RNA (By similarity). Associates, together with YBX1, on the MDR1 promoter. Together with NPM1, associates with rRNA (By similarity).</text>
</comment>
<comment type="catalytic activity">
    <reaction evidence="3">
        <text>a deoxyribonucleotide-2'-deoxyribose-5'-monophosphate-DNA + H2O = a 5'-end 2'-deoxyribose-5'-monophosphate-DNA + a 3'-end 2'-deoxyribonucleotide-DNA + H(+)</text>
        <dbReference type="Rhea" id="RHEA:81527"/>
        <dbReference type="Rhea" id="RHEA-COMP:13863"/>
        <dbReference type="Rhea" id="RHEA-COMP:19699"/>
        <dbReference type="Rhea" id="RHEA-COMP:19703"/>
        <dbReference type="ChEBI" id="CHEBI:15377"/>
        <dbReference type="ChEBI" id="CHEBI:15378"/>
        <dbReference type="ChEBI" id="CHEBI:138148"/>
        <dbReference type="ChEBI" id="CHEBI:231912"/>
        <dbReference type="ChEBI" id="CHEBI:231913"/>
    </reaction>
    <physiologicalReaction direction="left-to-right" evidence="3">
        <dbReference type="Rhea" id="RHEA:81528"/>
    </physiologicalReaction>
</comment>
<comment type="catalytic activity">
    <reaction evidence="3">
        <text>Exonucleolytic cleavage in the 3'- to 5'-direction to yield nucleoside 5'-phosphates.</text>
        <dbReference type="EC" id="3.1.11.2"/>
    </reaction>
</comment>
<comment type="catalytic activity">
    <reaction evidence="3">
        <text>a 3'-end 2'-deoxyribonucleotide-3'-phosphoglycolate-DNA + H2O = 2-phosphoglycolate + a 3'-end 2'-deoxyribonucleotide-DNA + H(+)</text>
        <dbReference type="Rhea" id="RHEA:81467"/>
        <dbReference type="Rhea" id="RHEA-COMP:13863"/>
        <dbReference type="Rhea" id="RHEA-COMP:19686"/>
        <dbReference type="ChEBI" id="CHEBI:15377"/>
        <dbReference type="ChEBI" id="CHEBI:15378"/>
        <dbReference type="ChEBI" id="CHEBI:58033"/>
        <dbReference type="ChEBI" id="CHEBI:138148"/>
        <dbReference type="ChEBI" id="CHEBI:231894"/>
    </reaction>
    <physiologicalReaction direction="left-to-right" evidence="3">
        <dbReference type="Rhea" id="RHEA:81468"/>
    </physiologicalReaction>
</comment>
<comment type="catalytic activity">
    <reaction evidence="3">
        <text>a 3'-end 2'-deoxyribonucleotide-8-oxoguanine-DNA + H2O = 8-oxo-dGMP + a 3'-end 2'-deoxyribonucleotide-DNA + H(+)</text>
        <dbReference type="Rhea" id="RHEA:81471"/>
        <dbReference type="Rhea" id="RHEA-COMP:13863"/>
        <dbReference type="Rhea" id="RHEA-COMP:19687"/>
        <dbReference type="ChEBI" id="CHEBI:15377"/>
        <dbReference type="ChEBI" id="CHEBI:15378"/>
        <dbReference type="ChEBI" id="CHEBI:63224"/>
        <dbReference type="ChEBI" id="CHEBI:138148"/>
        <dbReference type="ChEBI" id="CHEBI:231896"/>
    </reaction>
    <physiologicalReaction direction="left-to-right" evidence="3">
        <dbReference type="Rhea" id="RHEA:81472"/>
    </physiologicalReaction>
</comment>
<comment type="cofactor">
    <cofactor evidence="3">
        <name>Mg(2+)</name>
        <dbReference type="ChEBI" id="CHEBI:18420"/>
    </cofactor>
    <cofactor evidence="3">
        <name>Mn(2+)</name>
        <dbReference type="ChEBI" id="CHEBI:29035"/>
    </cofactor>
    <text evidence="3">Probably binds two magnesium or manganese ions per subunit.</text>
</comment>
<comment type="activity regulation">
    <text evidence="3">NPM1 stimulates endodeoxyribonuclease activity on double-stranded DNA with AP sites, but inhibits endoribonuclease activity on single-stranded RNA containing AP sites.</text>
</comment>
<comment type="subunit">
    <text evidence="3">Monomer. Homodimer; disulfide-linked. Component of the SET complex, composed of at least APEX1, SET, ANP32A, HMGB2, NME1 and TREX1. Associates with the dimer XRCC5/XRCC6 in a DNA-dependent manner. Interacts with SIRT1; the interaction is increased in the context of genotoxic stress. Interacts with HDAC1, HDAC2 and HDAC3; the interactions are not dependent on the APEX1 acetylation status. Interacts with XRCC1; the interaction is induced by SIRT1 and increased with the APEX1 acetylated form. Interacts with NPM1 (via N-terminal domain); the interaction is RNA-dependent and decreases in hydrogen peroxide-damaged cells. Interacts (via N-terminus) with YBX1 (via C-terminus); the interaction is increased in presence of APEX1 acetylated at Lys-6 and Lys-7. Interacts with HNRNPL; the interaction is DNA-dependent. Interacts (via N-terminus) with KPNA1 and KPNA2. Interacts with TXN; the interaction stimulates the FOS/JUN AP-1 complex DNA-binding activity in a redox-dependent manner. Interacts with GZMA, KRT8, MDM2, POLB, PRDX6, PRPF19, RPLP0, TOMM20 and WDR77. Binds to CDK5 (By similarity).</text>
</comment>
<comment type="subcellular location">
    <subcellularLocation>
        <location>Nucleus</location>
    </subcellularLocation>
    <subcellularLocation>
        <location evidence="1">Nucleus</location>
        <location evidence="1">Nucleolus</location>
    </subcellularLocation>
    <subcellularLocation>
        <location evidence="5">Nucleus speckle</location>
    </subcellularLocation>
    <subcellularLocation>
        <location evidence="1">Endoplasmic reticulum</location>
    </subcellularLocation>
    <subcellularLocation>
        <location evidence="5">Cytoplasm</location>
    </subcellularLocation>
    <text evidence="1">Detected in the cytoplasm of B-cells stimulated to switch. Colocalized with SIRT1 in the nucleus. Colocalized with YBX1 in nuclear speckles after genotoxic stress. Together with OGG1 is recruited to nuclear speckles in UVA-irradiated cells. Colocalized with nucleolin and NPM1 in the nucleolus. Its nucleolar localization is cell cycle dependent and requires active rRNA transcription (By similarity). Colocalized with calreticulin in the endoplasmic reticulum. Translocation from the nucleus to the cytoplasm is stimulated in presence of nitric oxide (NO) and function in a CRM1-dependent manner, possibly as a consequence of demasking a nuclear export signal (amino acid position 64-80). S-nitrosylation at Cys-93 and Cys-310 regulates its nuclear-cytosolic shuttling. Ubiquitinated form is localized predominantly in the cytoplasm (By similarity).</text>
</comment>
<comment type="subcellular location">
    <molecule>DNA repair nuclease/redox regulator APEX1, mitochondrial</molecule>
    <subcellularLocation>
        <location>Mitochondrion</location>
    </subcellularLocation>
    <text evidence="1">Translocation from the cytoplasm to the mitochondria is mediated by ROS signaling and cleavage mediated by granzyme A. Tom20-dependent translocated mitochondrial APEX1 level is significantly increased after genotoxic stress. The cleaved APEX2 is only detected in mitochondria (By similarity).</text>
</comment>
<comment type="domain">
    <text evidence="1">The N-terminus contains the redox activity while the C-terminus exerts the DNA AP-endodeoxyribonuclease activity; both function are independent in their actions. An unconventional mitochondrial targeting sequence (MTS) is harbored within the C-terminus, that appears to be masked by the N-terminal sequence containing the nuclear localization signal (NLS), that probably blocks the interaction between the MTS and Tom proteins (By similarity).</text>
</comment>
<comment type="PTM">
    <text evidence="3">Phosphorylated. Phosphorylation by kinase PKC or casein kinase CK2 results in enhanced redox activity that stimulates binding of the FOS/JUN AP-1 complex to its cognate binding site. AP-endodeoxyribonuclease activity is not affected by CK2-mediated phosphorylation. Phosphorylation of Thr-233 by CDK5 in response to MPP(+)/MPTP (1-methyl-4-phenylpyridinium) reduces AP-endodeoxyribonuclease activity resulting in accumulation of DNA damage and contributing to neuronal death (By similarity).</text>
</comment>
<comment type="PTM">
    <text evidence="3">Acetylated on Lys-6 and Lys-7. Acetylation is increased by the transcriptional coactivator EP300 acetyltransferase, genotoxic agents like H(2)O(2) and methyl methanesulfonate (MMS). Acetylation increases its binding affinity to the negative calcium response element (nCaRE) DNA promoter. The acetylated form induces a stronger binding of YBX1 to the Y-box sequence in the MDR1 promoter than the unacetylated form. Deacetylated on lysines. Lys-6 and Lys-7 are deacetylated by SIRT1 (By similarity).</text>
</comment>
<comment type="PTM">
    <text evidence="3">Cleaved at Lys-31 by granzyme A to create the mitochondrial form; leading in reduction of binding to DNA, AP endodeoxyribonuclease activity, redox activation of transcription factors and to enhanced cell death. Cleaved by granzyme K; leading to intracellular ROS accumulation and enhanced cell death after oxidative stress (By similarity).</text>
</comment>
<comment type="PTM">
    <text evidence="3">Cys-69 and Cys-93 are nitrosylated in response to nitric oxide (NO) and lead to the exposure of the nuclear export signal (NES).</text>
</comment>
<comment type="PTM">
    <text evidence="3">Ubiquitinated by MDM2; leading to translocation to the cytoplasm and proteasomal degradation.</text>
</comment>
<comment type="miscellaneous">
    <text evidence="2">The specific activity of the cleaved mitochondrial endodeoxyribonuclease appears to be about 3-fold higher than of the full-length form. Extract of mitochondria, but not of nuclei or cytosol, cleaves recombinant APEX1 to generate a mitochondrial APEX1-sized product (By similarity).</text>
</comment>
<comment type="similarity">
    <text evidence="7">Belongs to the DNA repair enzymes AP/ExoA family.</text>
</comment>
<proteinExistence type="inferred from homology"/>
<accession>A2T7I6</accession>
<name>APEX1_PONPY</name>
<evidence type="ECO:0000250" key="1"/>
<evidence type="ECO:0000250" key="2">
    <source>
        <dbReference type="UniProtKB" id="P23196"/>
    </source>
</evidence>
<evidence type="ECO:0000250" key="3">
    <source>
        <dbReference type="UniProtKB" id="P27695"/>
    </source>
</evidence>
<evidence type="ECO:0000250" key="4">
    <source>
        <dbReference type="UniProtKB" id="P28352"/>
    </source>
</evidence>
<evidence type="ECO:0000255" key="5">
    <source>
        <dbReference type="PROSITE-ProRule" id="PRU00764"/>
    </source>
</evidence>
<evidence type="ECO:0000256" key="6">
    <source>
        <dbReference type="SAM" id="MobiDB-lite"/>
    </source>
</evidence>
<evidence type="ECO:0000305" key="7"/>
<feature type="chain" id="PRO_0000285548" description="DNA repair nuclease/redox regulator APEX1">
    <location>
        <begin position="1"/>
        <end position="318"/>
    </location>
</feature>
<feature type="chain" id="PRO_0000402810" description="DNA repair nuclease/redox regulator APEX1, mitochondrial">
    <location>
        <begin position="32"/>
        <end position="318"/>
    </location>
</feature>
<feature type="region of interest" description="Disordered" evidence="6">
    <location>
        <begin position="1"/>
        <end position="60"/>
    </location>
</feature>
<feature type="region of interest" description="Necessary for interaction with YBX1, binding to RNA, association together with NPM1 to rRNA, endoribonuclease activity on abasic RNA and localization in the nucleoli" evidence="1">
    <location>
        <begin position="1"/>
        <end position="33"/>
    </location>
</feature>
<feature type="region of interest" description="Necessary for interaction with NPM1 and for efficient rRNA binding" evidence="1">
    <location>
        <begin position="23"/>
        <end position="33"/>
    </location>
</feature>
<feature type="region of interest" description="Mitochondrial targeting sequence (MTS)" evidence="1">
    <location>
        <begin position="289"/>
        <end position="318"/>
    </location>
</feature>
<feature type="short sequence motif" description="Nuclear localization signal (NLS)" evidence="1">
    <location>
        <begin position="8"/>
        <end position="13"/>
    </location>
</feature>
<feature type="short sequence motif" description="Nuclear export signal (NES)" evidence="1">
    <location>
        <begin position="64"/>
        <end position="80"/>
    </location>
</feature>
<feature type="compositionally biased region" description="Basic and acidic residues" evidence="6">
    <location>
        <begin position="16"/>
        <end position="38"/>
    </location>
</feature>
<feature type="active site" evidence="1">
    <location>
        <position position="171"/>
    </location>
</feature>
<feature type="active site" description="Proton donor/acceptor" evidence="1">
    <location>
        <position position="210"/>
    </location>
</feature>
<feature type="binding site" evidence="1">
    <location>
        <position position="70"/>
    </location>
    <ligand>
        <name>Mg(2+)</name>
        <dbReference type="ChEBI" id="CHEBI:18420"/>
        <label>1</label>
    </ligand>
</feature>
<feature type="binding site" evidence="1">
    <location>
        <position position="96"/>
    </location>
    <ligand>
        <name>Mg(2+)</name>
        <dbReference type="ChEBI" id="CHEBI:18420"/>
        <label>1</label>
    </ligand>
</feature>
<feature type="binding site" evidence="1">
    <location>
        <position position="210"/>
    </location>
    <ligand>
        <name>Mg(2+)</name>
        <dbReference type="ChEBI" id="CHEBI:18420"/>
        <label>2</label>
    </ligand>
</feature>
<feature type="binding site" evidence="1">
    <location>
        <position position="212"/>
    </location>
    <ligand>
        <name>Mg(2+)</name>
        <dbReference type="ChEBI" id="CHEBI:18420"/>
        <label>2</label>
    </ligand>
</feature>
<feature type="binding site" evidence="1">
    <location>
        <position position="308"/>
    </location>
    <ligand>
        <name>Mg(2+)</name>
        <dbReference type="ChEBI" id="CHEBI:18420"/>
        <label>1</label>
    </ligand>
</feature>
<feature type="site" description="Cleavage; by granzyme A" evidence="1">
    <location>
        <begin position="31"/>
        <end position="32"/>
    </location>
</feature>
<feature type="site" description="Transition state stabilizer" evidence="1">
    <location>
        <position position="212"/>
    </location>
</feature>
<feature type="site" description="Important for catalytic activity" evidence="1">
    <location>
        <position position="283"/>
    </location>
</feature>
<feature type="site" description="Interaction with DNA substrate" evidence="1">
    <location>
        <position position="309"/>
    </location>
</feature>
<feature type="modified residue" description="N6-acetyllysine; by EP300" evidence="3">
    <location>
        <position position="6"/>
    </location>
</feature>
<feature type="modified residue" description="N6-acetyllysine; by EP300" evidence="3">
    <location>
        <position position="7"/>
    </location>
</feature>
<feature type="modified residue" description="N6-acetyllysine" evidence="3">
    <location>
        <position position="27"/>
    </location>
</feature>
<feature type="modified residue" description="N6-acetyllysine" evidence="3">
    <location>
        <position position="31"/>
    </location>
</feature>
<feature type="modified residue" description="N6-acetyllysine" evidence="3">
    <location>
        <position position="32"/>
    </location>
</feature>
<feature type="modified residue" description="N6-acetyllysine" evidence="3">
    <location>
        <position position="35"/>
    </location>
</feature>
<feature type="modified residue" description="Phosphoserine" evidence="3">
    <location>
        <position position="54"/>
    </location>
</feature>
<feature type="modified residue" description="S-nitrosocysteine; alternate" evidence="3">
    <location>
        <position position="65"/>
    </location>
</feature>
<feature type="modified residue" description="S-nitrosocysteine; alternate" evidence="3">
    <location>
        <position position="93"/>
    </location>
</feature>
<feature type="modified residue" description="N6-acetyllysine" evidence="3">
    <location>
        <position position="197"/>
    </location>
</feature>
<feature type="modified residue" description="Phosphothreonine; by CDK5" evidence="4">
    <location>
        <position position="233"/>
    </location>
</feature>
<feature type="modified residue" description="S-nitrosocysteine" evidence="3">
    <location>
        <position position="310"/>
    </location>
</feature>
<feature type="disulfide bond" description="Alternate" evidence="1">
    <location>
        <begin position="65"/>
        <end position="93"/>
    </location>
</feature>
<gene>
    <name type="primary">APEX1</name>
    <name type="synonym">APE</name>
    <name type="synonym">APEX</name>
    <name type="synonym">BAP1</name>
    <name type="synonym">REF1</name>
</gene>
<reference key="1">
    <citation type="submission" date="2006-08" db="EMBL/GenBank/DDBJ databases">
        <title>Positive selection in transcription factor genes on the human lineage.</title>
        <authorList>
            <person name="Nickel G.C."/>
            <person name="Tefft D.L."/>
            <person name="Trevarthen K."/>
            <person name="Funt J."/>
            <person name="Adams M.D."/>
        </authorList>
    </citation>
    <scope>NUCLEOTIDE SEQUENCE [GENOMIC DNA]</scope>
</reference>
<dbReference type="EC" id="3.1.11.2" evidence="3"/>
<dbReference type="EC" id="3.1.21.-" evidence="3"/>
<dbReference type="EMBL" id="DQ977483">
    <property type="protein sequence ID" value="ABM89264.1"/>
    <property type="molecule type" value="Genomic_DNA"/>
</dbReference>
<dbReference type="RefSeq" id="XP_054304344.1">
    <property type="nucleotide sequence ID" value="XM_054448369.1"/>
</dbReference>
<dbReference type="RefSeq" id="XP_054304345.1">
    <property type="nucleotide sequence ID" value="XM_054448370.2"/>
</dbReference>
<dbReference type="RefSeq" id="XP_054304346.1">
    <property type="nucleotide sequence ID" value="XM_054448371.2"/>
</dbReference>
<dbReference type="RefSeq" id="XP_063507436.1">
    <property type="nucleotide sequence ID" value="XM_063651366.1"/>
</dbReference>
<dbReference type="BMRB" id="A2T7I6"/>
<dbReference type="SMR" id="A2T7I6"/>
<dbReference type="GeneID" id="129012580"/>
<dbReference type="GO" id="GO:0005737">
    <property type="term" value="C:cytoplasm"/>
    <property type="evidence" value="ECO:0000250"/>
    <property type="project" value="UniProtKB"/>
</dbReference>
<dbReference type="GO" id="GO:0005783">
    <property type="term" value="C:endoplasmic reticulum"/>
    <property type="evidence" value="ECO:0007669"/>
    <property type="project" value="UniProtKB-SubCell"/>
</dbReference>
<dbReference type="GO" id="GO:0005739">
    <property type="term" value="C:mitochondrion"/>
    <property type="evidence" value="ECO:0000250"/>
    <property type="project" value="UniProtKB"/>
</dbReference>
<dbReference type="GO" id="GO:0016607">
    <property type="term" value="C:nuclear speck"/>
    <property type="evidence" value="ECO:0000250"/>
    <property type="project" value="UniProtKB"/>
</dbReference>
<dbReference type="GO" id="GO:0005730">
    <property type="term" value="C:nucleolus"/>
    <property type="evidence" value="ECO:0000250"/>
    <property type="project" value="UniProtKB"/>
</dbReference>
<dbReference type="GO" id="GO:0005654">
    <property type="term" value="C:nucleoplasm"/>
    <property type="evidence" value="ECO:0000250"/>
    <property type="project" value="UniProtKB"/>
</dbReference>
<dbReference type="GO" id="GO:0005634">
    <property type="term" value="C:nucleus"/>
    <property type="evidence" value="ECO:0000250"/>
    <property type="project" value="UniProtKB"/>
</dbReference>
<dbReference type="GO" id="GO:0008408">
    <property type="term" value="F:3'-5' exonuclease activity"/>
    <property type="evidence" value="ECO:0000250"/>
    <property type="project" value="UniProtKB"/>
</dbReference>
<dbReference type="GO" id="GO:0031490">
    <property type="term" value="F:chromatin DNA binding"/>
    <property type="evidence" value="ECO:0000250"/>
    <property type="project" value="UniProtKB"/>
</dbReference>
<dbReference type="GO" id="GO:0052720">
    <property type="term" value="F:class II DNA-(apurinic or apyrimidinic site) endonuclease activity"/>
    <property type="evidence" value="ECO:0000250"/>
    <property type="project" value="UniProtKB"/>
</dbReference>
<dbReference type="GO" id="GO:0003684">
    <property type="term" value="F:damaged DNA binding"/>
    <property type="evidence" value="ECO:0000250"/>
    <property type="project" value="UniProtKB"/>
</dbReference>
<dbReference type="GO" id="GO:0140431">
    <property type="term" value="F:DNA-(abasic site) binding"/>
    <property type="evidence" value="ECO:0000250"/>
    <property type="project" value="UniProtKB"/>
</dbReference>
<dbReference type="GO" id="GO:0003906">
    <property type="term" value="F:DNA-(apurinic or apyrimidinic site) endonuclease activity"/>
    <property type="evidence" value="ECO:0000250"/>
    <property type="project" value="UniProtKB"/>
</dbReference>
<dbReference type="GO" id="GO:0008311">
    <property type="term" value="F:double-stranded DNA 3'-5' DNA exonuclease activity"/>
    <property type="evidence" value="ECO:0007669"/>
    <property type="project" value="TreeGrafter"/>
</dbReference>
<dbReference type="GO" id="GO:0046872">
    <property type="term" value="F:metal ion binding"/>
    <property type="evidence" value="ECO:0007669"/>
    <property type="project" value="UniProtKB-KW"/>
</dbReference>
<dbReference type="GO" id="GO:0016491">
    <property type="term" value="F:oxidoreductase activity"/>
    <property type="evidence" value="ECO:0000250"/>
    <property type="project" value="UniProtKB"/>
</dbReference>
<dbReference type="GO" id="GO:0008081">
    <property type="term" value="F:phosphoric diester hydrolase activity"/>
    <property type="evidence" value="ECO:0007669"/>
    <property type="project" value="TreeGrafter"/>
</dbReference>
<dbReference type="GO" id="GO:0003723">
    <property type="term" value="F:RNA binding"/>
    <property type="evidence" value="ECO:0007669"/>
    <property type="project" value="UniProtKB-KW"/>
</dbReference>
<dbReference type="GO" id="GO:0016890">
    <property type="term" value="F:site-specific endodeoxyribonuclease activity, specific for altered base"/>
    <property type="evidence" value="ECO:0000250"/>
    <property type="project" value="UniProtKB"/>
</dbReference>
<dbReference type="GO" id="GO:0006284">
    <property type="term" value="P:base-excision repair"/>
    <property type="evidence" value="ECO:0007669"/>
    <property type="project" value="TreeGrafter"/>
</dbReference>
<dbReference type="GO" id="GO:0006310">
    <property type="term" value="P:DNA recombination"/>
    <property type="evidence" value="ECO:0007669"/>
    <property type="project" value="UniProtKB-KW"/>
</dbReference>
<dbReference type="GO" id="GO:0006281">
    <property type="term" value="P:DNA repair"/>
    <property type="evidence" value="ECO:0000250"/>
    <property type="project" value="UniProtKB"/>
</dbReference>
<dbReference type="GO" id="GO:0044029">
    <property type="term" value="P:positive regulation of gene expression via chromosomal CpG island demethylation"/>
    <property type="evidence" value="ECO:0000250"/>
    <property type="project" value="UniProtKB"/>
</dbReference>
<dbReference type="GO" id="GO:0042981">
    <property type="term" value="P:regulation of apoptotic process"/>
    <property type="evidence" value="ECO:0000250"/>
    <property type="project" value="UniProtKB"/>
</dbReference>
<dbReference type="GO" id="GO:0043488">
    <property type="term" value="P:regulation of mRNA stability"/>
    <property type="evidence" value="ECO:0000250"/>
    <property type="project" value="UniProtKB"/>
</dbReference>
<dbReference type="CDD" id="cd09087">
    <property type="entry name" value="Ape1-like_AP-endo"/>
    <property type="match status" value="1"/>
</dbReference>
<dbReference type="FunFam" id="3.60.10.10:FF:000009">
    <property type="entry name" value="DNA-(apurinic or apyrimidinic site) lyase"/>
    <property type="match status" value="1"/>
</dbReference>
<dbReference type="Gene3D" id="3.60.10.10">
    <property type="entry name" value="Endonuclease/exonuclease/phosphatase"/>
    <property type="match status" value="1"/>
</dbReference>
<dbReference type="InterPro" id="IPR004808">
    <property type="entry name" value="AP_endonuc_1"/>
</dbReference>
<dbReference type="InterPro" id="IPR020847">
    <property type="entry name" value="AP_endonuclease_F1_BS"/>
</dbReference>
<dbReference type="InterPro" id="IPR020848">
    <property type="entry name" value="AP_endonuclease_F1_CS"/>
</dbReference>
<dbReference type="InterPro" id="IPR036691">
    <property type="entry name" value="Endo/exonu/phosph_ase_sf"/>
</dbReference>
<dbReference type="InterPro" id="IPR005135">
    <property type="entry name" value="Endo/exonuclease/phosphatase"/>
</dbReference>
<dbReference type="NCBIfam" id="TIGR00195">
    <property type="entry name" value="exoDNase_III"/>
    <property type="match status" value="1"/>
</dbReference>
<dbReference type="NCBIfam" id="TIGR00633">
    <property type="entry name" value="xth"/>
    <property type="match status" value="1"/>
</dbReference>
<dbReference type="PANTHER" id="PTHR22748">
    <property type="entry name" value="AP ENDONUCLEASE"/>
    <property type="match status" value="1"/>
</dbReference>
<dbReference type="PANTHER" id="PTHR22748:SF6">
    <property type="entry name" value="DNA-(APURINIC OR APYRIMIDINIC SITE) ENDONUCLEASE"/>
    <property type="match status" value="1"/>
</dbReference>
<dbReference type="Pfam" id="PF03372">
    <property type="entry name" value="Exo_endo_phos"/>
    <property type="match status" value="1"/>
</dbReference>
<dbReference type="SUPFAM" id="SSF56219">
    <property type="entry name" value="DNase I-like"/>
    <property type="match status" value="1"/>
</dbReference>
<dbReference type="PROSITE" id="PS00726">
    <property type="entry name" value="AP_NUCLEASE_F1_1"/>
    <property type="match status" value="1"/>
</dbReference>
<dbReference type="PROSITE" id="PS00727">
    <property type="entry name" value="AP_NUCLEASE_F1_2"/>
    <property type="match status" value="1"/>
</dbReference>
<dbReference type="PROSITE" id="PS00728">
    <property type="entry name" value="AP_NUCLEASE_F1_3"/>
    <property type="match status" value="1"/>
</dbReference>
<dbReference type="PROSITE" id="PS51435">
    <property type="entry name" value="AP_NUCLEASE_F1_4"/>
    <property type="match status" value="1"/>
</dbReference>
<protein>
    <recommendedName>
        <fullName>DNA repair nuclease/redox regulator APEX1</fullName>
        <ecNumber evidence="3">3.1.11.2</ecNumber>
        <ecNumber evidence="3">3.1.21.-</ecNumber>
    </recommendedName>
    <alternativeName>
        <fullName>APEX nuclease</fullName>
        <shortName>APEN</shortName>
    </alternativeName>
    <alternativeName>
        <fullName>Apurinic-apyrimidinic endonuclease 1</fullName>
        <shortName>AP endonuclease 1</shortName>
    </alternativeName>
    <alternativeName>
        <fullName>Redox factor-1</fullName>
        <shortName>REF-1</shortName>
    </alternativeName>
    <component>
        <recommendedName>
            <fullName>DNA repair nuclease/redox regulator APEX1, mitochondrial</fullName>
        </recommendedName>
    </component>
</protein>